<accession>Q9X1K7</accession>
<dbReference type="EC" id="2.3.1.89" evidence="1"/>
<dbReference type="EMBL" id="AE000512">
    <property type="protein sequence ID" value="AAD36586.1"/>
    <property type="molecule type" value="Genomic_DNA"/>
</dbReference>
<dbReference type="PIR" id="H72245">
    <property type="entry name" value="H72245"/>
</dbReference>
<dbReference type="RefSeq" id="NP_229319.1">
    <property type="nucleotide sequence ID" value="NC_000853.1"/>
</dbReference>
<dbReference type="SMR" id="Q9X1K7"/>
<dbReference type="FunCoup" id="Q9X1K7">
    <property type="interactions" value="95"/>
</dbReference>
<dbReference type="STRING" id="243274.TM_1519"/>
<dbReference type="PaxDb" id="243274-THEMA_06705"/>
<dbReference type="EnsemblBacteria" id="AAD36586">
    <property type="protein sequence ID" value="AAD36586"/>
    <property type="gene ID" value="TM_1519"/>
</dbReference>
<dbReference type="KEGG" id="tma:TM1519"/>
<dbReference type="PATRIC" id="fig|243274.5.peg.1536"/>
<dbReference type="eggNOG" id="COG2171">
    <property type="taxonomic scope" value="Bacteria"/>
</dbReference>
<dbReference type="InParanoid" id="Q9X1K7"/>
<dbReference type="OrthoDB" id="9788080at2"/>
<dbReference type="UniPathway" id="UPA00034">
    <property type="reaction ID" value="UER00022"/>
</dbReference>
<dbReference type="Proteomes" id="UP000008183">
    <property type="component" value="Chromosome"/>
</dbReference>
<dbReference type="GO" id="GO:0047200">
    <property type="term" value="F:tetrahydrodipicolinate N-acetyltransferase activity"/>
    <property type="evidence" value="ECO:0007669"/>
    <property type="project" value="UniProtKB-EC"/>
</dbReference>
<dbReference type="GO" id="GO:0019877">
    <property type="term" value="P:diaminopimelate biosynthetic process"/>
    <property type="evidence" value="ECO:0007669"/>
    <property type="project" value="UniProtKB-UniRule"/>
</dbReference>
<dbReference type="GO" id="GO:0009089">
    <property type="term" value="P:lysine biosynthetic process via diaminopimelate"/>
    <property type="evidence" value="ECO:0007669"/>
    <property type="project" value="UniProtKB-UniRule"/>
</dbReference>
<dbReference type="CDD" id="cd03350">
    <property type="entry name" value="LbH_THP_succinylT"/>
    <property type="match status" value="1"/>
</dbReference>
<dbReference type="Gene3D" id="2.160.10.10">
    <property type="entry name" value="Hexapeptide repeat proteins"/>
    <property type="match status" value="1"/>
</dbReference>
<dbReference type="Gene3D" id="3.30.70.250">
    <property type="entry name" value="Malonyl-CoA ACP transacylase, ACP-binding"/>
    <property type="match status" value="1"/>
</dbReference>
<dbReference type="HAMAP" id="MF_01691">
    <property type="entry name" value="DapH"/>
    <property type="match status" value="1"/>
</dbReference>
<dbReference type="InterPro" id="IPR019873">
    <property type="entry name" value="DapH"/>
</dbReference>
<dbReference type="InterPro" id="IPR013710">
    <property type="entry name" value="DapH_N"/>
</dbReference>
<dbReference type="InterPro" id="IPR001451">
    <property type="entry name" value="Hexapep"/>
</dbReference>
<dbReference type="InterPro" id="IPR018357">
    <property type="entry name" value="Hexapep_transf_CS"/>
</dbReference>
<dbReference type="InterPro" id="IPR050179">
    <property type="entry name" value="Trans_hexapeptide_repeat"/>
</dbReference>
<dbReference type="InterPro" id="IPR011004">
    <property type="entry name" value="Trimer_LpxA-like_sf"/>
</dbReference>
<dbReference type="NCBIfam" id="TIGR03532">
    <property type="entry name" value="DapD_Ac"/>
    <property type="match status" value="1"/>
</dbReference>
<dbReference type="PANTHER" id="PTHR43300:SF10">
    <property type="entry name" value="2,3,4,5-TETRAHYDROPYRIDINE-2,6-DICARBOXYLATE N-ACETYLTRANSFERASE"/>
    <property type="match status" value="1"/>
</dbReference>
<dbReference type="PANTHER" id="PTHR43300">
    <property type="entry name" value="ACETYLTRANSFERASE"/>
    <property type="match status" value="1"/>
</dbReference>
<dbReference type="Pfam" id="PF08503">
    <property type="entry name" value="DapH_N"/>
    <property type="match status" value="1"/>
</dbReference>
<dbReference type="Pfam" id="PF00132">
    <property type="entry name" value="Hexapep"/>
    <property type="match status" value="1"/>
</dbReference>
<dbReference type="Pfam" id="PF14602">
    <property type="entry name" value="Hexapep_2"/>
    <property type="match status" value="1"/>
</dbReference>
<dbReference type="SUPFAM" id="SSF51161">
    <property type="entry name" value="Trimeric LpxA-like enzymes"/>
    <property type="match status" value="1"/>
</dbReference>
<dbReference type="PROSITE" id="PS00101">
    <property type="entry name" value="HEXAPEP_TRANSFERASES"/>
    <property type="match status" value="1"/>
</dbReference>
<name>DAPH_THEMA</name>
<sequence length="236" mass="25283">MSELDAREIIEMIAKAKKKTPIVAYIKGDLAGIDFSSFKFFGDERFGILFGEYEDFKKLLEEHREKIEDYHLEVKARNSALPLADLTKYKARIEPGAIIRDMVEIGEGAVIMMGAVINVGAVIGEGTMIDMNAVVGGRAIIGKKCHIGAGAVIAGVIEPPSAKPVVIEDEVLVGANAVILEGVTVGKGAVVAAGAVVTKDVPPYTVVAGVPARVIKQIDEKTKEKTKIVDELRNLE</sequence>
<feature type="chain" id="PRO_0000376729" description="2,3,4,5-tetrahydropyridine-2,6-dicarboxylate N-acetyltransferase">
    <location>
        <begin position="1"/>
        <end position="236"/>
    </location>
</feature>
<evidence type="ECO:0000255" key="1">
    <source>
        <dbReference type="HAMAP-Rule" id="MF_01691"/>
    </source>
</evidence>
<comment type="function">
    <text evidence="1">Catalyzes the transfer of an acetyl group from acetyl-CoA to tetrahydrodipicolinate.</text>
</comment>
<comment type="catalytic activity">
    <reaction evidence="1">
        <text>(S)-2,3,4,5-tetrahydrodipicolinate + acetyl-CoA + H2O = L-2-acetamido-6-oxoheptanedioate + CoA</text>
        <dbReference type="Rhea" id="RHEA:13085"/>
        <dbReference type="ChEBI" id="CHEBI:15377"/>
        <dbReference type="ChEBI" id="CHEBI:16845"/>
        <dbReference type="ChEBI" id="CHEBI:57287"/>
        <dbReference type="ChEBI" id="CHEBI:57288"/>
        <dbReference type="ChEBI" id="CHEBI:58117"/>
        <dbReference type="EC" id="2.3.1.89"/>
    </reaction>
</comment>
<comment type="pathway">
    <text evidence="1">Amino-acid biosynthesis; L-lysine biosynthesis via DAP pathway; LL-2,6-diaminopimelate from (S)-tetrahydrodipicolinate (acetylase route): step 1/3.</text>
</comment>
<comment type="similarity">
    <text evidence="1">Belongs to the transferase hexapeptide repeat family. DapH subfamily.</text>
</comment>
<reference key="1">
    <citation type="journal article" date="1999" name="Nature">
        <title>Evidence for lateral gene transfer between Archaea and Bacteria from genome sequence of Thermotoga maritima.</title>
        <authorList>
            <person name="Nelson K.E."/>
            <person name="Clayton R.A."/>
            <person name="Gill S.R."/>
            <person name="Gwinn M.L."/>
            <person name="Dodson R.J."/>
            <person name="Haft D.H."/>
            <person name="Hickey E.K."/>
            <person name="Peterson J.D."/>
            <person name="Nelson W.C."/>
            <person name="Ketchum K.A."/>
            <person name="McDonald L.A."/>
            <person name="Utterback T.R."/>
            <person name="Malek J.A."/>
            <person name="Linher K.D."/>
            <person name="Garrett M.M."/>
            <person name="Stewart A.M."/>
            <person name="Cotton M.D."/>
            <person name="Pratt M.S."/>
            <person name="Phillips C.A."/>
            <person name="Richardson D.L."/>
            <person name="Heidelberg J.F."/>
            <person name="Sutton G.G."/>
            <person name="Fleischmann R.D."/>
            <person name="Eisen J.A."/>
            <person name="White O."/>
            <person name="Salzberg S.L."/>
            <person name="Smith H.O."/>
            <person name="Venter J.C."/>
            <person name="Fraser C.M."/>
        </authorList>
    </citation>
    <scope>NUCLEOTIDE SEQUENCE [LARGE SCALE GENOMIC DNA]</scope>
    <source>
        <strain>ATCC 43589 / DSM 3109 / JCM 10099 / NBRC 100826 / MSB8</strain>
    </source>
</reference>
<gene>
    <name evidence="1" type="primary">dapH</name>
    <name type="ordered locus">TM_1519</name>
</gene>
<protein>
    <recommendedName>
        <fullName evidence="1">2,3,4,5-tetrahydropyridine-2,6-dicarboxylate N-acetyltransferase</fullName>
        <ecNumber evidence="1">2.3.1.89</ecNumber>
    </recommendedName>
    <alternativeName>
        <fullName evidence="1">Tetrahydrodipicolinate N-acetyltransferase</fullName>
        <shortName evidence="1">THP acetyltransferase</shortName>
        <shortName evidence="1">Tetrahydropicolinate acetylase</shortName>
    </alternativeName>
</protein>
<organism>
    <name type="scientific">Thermotoga maritima (strain ATCC 43589 / DSM 3109 / JCM 10099 / NBRC 100826 / MSB8)</name>
    <dbReference type="NCBI Taxonomy" id="243274"/>
    <lineage>
        <taxon>Bacteria</taxon>
        <taxon>Thermotogati</taxon>
        <taxon>Thermotogota</taxon>
        <taxon>Thermotogae</taxon>
        <taxon>Thermotogales</taxon>
        <taxon>Thermotogaceae</taxon>
        <taxon>Thermotoga</taxon>
    </lineage>
</organism>
<proteinExistence type="inferred from homology"/>
<keyword id="KW-0012">Acyltransferase</keyword>
<keyword id="KW-0028">Amino-acid biosynthesis</keyword>
<keyword id="KW-0220">Diaminopimelate biosynthesis</keyword>
<keyword id="KW-0457">Lysine biosynthesis</keyword>
<keyword id="KW-1185">Reference proteome</keyword>
<keyword id="KW-0677">Repeat</keyword>
<keyword id="KW-0808">Transferase</keyword>